<gene>
    <name type="primary">PETE</name>
</gene>
<proteinExistence type="evidence at protein level"/>
<evidence type="ECO:0000250" key="1">
    <source>
        <dbReference type="UniProtKB" id="P18068"/>
    </source>
</evidence>
<evidence type="ECO:0000269" key="2">
    <source ref="1"/>
</evidence>
<evidence type="ECO:0000305" key="3"/>
<accession>P20422</accession>
<protein>
    <recommendedName>
        <fullName>Plastocyanin</fullName>
    </recommendedName>
</protein>
<name>PLAS_DAUCA</name>
<feature type="chain" id="PRO_0000085564" description="Plastocyanin">
    <location>
        <begin position="1"/>
        <end position="97"/>
    </location>
</feature>
<feature type="domain" description="Plastocyanin-like">
    <location>
        <begin position="1"/>
        <end position="97"/>
    </location>
</feature>
<feature type="binding site" evidence="1">
    <location>
        <position position="37"/>
    </location>
    <ligand>
        <name>Cu cation</name>
        <dbReference type="ChEBI" id="CHEBI:23378"/>
    </ligand>
</feature>
<feature type="binding site" evidence="1">
    <location>
        <position position="82"/>
    </location>
    <ligand>
        <name>Cu cation</name>
        <dbReference type="ChEBI" id="CHEBI:23378"/>
    </ligand>
</feature>
<feature type="binding site" evidence="1">
    <location>
        <position position="85"/>
    </location>
    <ligand>
        <name>Cu cation</name>
        <dbReference type="ChEBI" id="CHEBI:23378"/>
    </ligand>
</feature>
<feature type="binding site" evidence="1">
    <location>
        <position position="90"/>
    </location>
    <ligand>
        <name>Cu cation</name>
        <dbReference type="ChEBI" id="CHEBI:23378"/>
    </ligand>
</feature>
<sequence length="97" mass="10181">AEVKLGADDGALVFSPSSFSVAKGEGISFKNNAGFPHNIVFDEDEVPAGVDVSKISQEDYLDGAGESFTVTLTEKGTYKFYCEPHAGAGMKGEVTVT</sequence>
<keyword id="KW-0150">Chloroplast</keyword>
<keyword id="KW-0186">Copper</keyword>
<keyword id="KW-0903">Direct protein sequencing</keyword>
<keyword id="KW-0249">Electron transport</keyword>
<keyword id="KW-0472">Membrane</keyword>
<keyword id="KW-0479">Metal-binding</keyword>
<keyword id="KW-0934">Plastid</keyword>
<keyword id="KW-0793">Thylakoid</keyword>
<keyword id="KW-0813">Transport</keyword>
<organism>
    <name type="scientific">Daucus carota</name>
    <name type="common">Wild carrot</name>
    <dbReference type="NCBI Taxonomy" id="4039"/>
    <lineage>
        <taxon>Eukaryota</taxon>
        <taxon>Viridiplantae</taxon>
        <taxon>Streptophyta</taxon>
        <taxon>Embryophyta</taxon>
        <taxon>Tracheophyta</taxon>
        <taxon>Spermatophyta</taxon>
        <taxon>Magnoliopsida</taxon>
        <taxon>eudicotyledons</taxon>
        <taxon>Gunneridae</taxon>
        <taxon>Pentapetalae</taxon>
        <taxon>asterids</taxon>
        <taxon>campanulids</taxon>
        <taxon>Apiales</taxon>
        <taxon>Apiaceae</taxon>
        <taxon>Apioideae</taxon>
        <taxon>Scandiceae</taxon>
        <taxon>Daucinae</taxon>
        <taxon>Daucus</taxon>
        <taxon>Daucus sect. Daucus</taxon>
    </lineage>
</organism>
<comment type="function">
    <text>Participates in electron transfer between P700 and the cytochrome b6-f complex in photosystem I.</text>
</comment>
<comment type="cofactor">
    <cofactor evidence="1">
        <name>Cu(2+)</name>
        <dbReference type="ChEBI" id="CHEBI:29036"/>
    </cofactor>
</comment>
<comment type="subcellular location">
    <subcellularLocation>
        <location evidence="2">Plastid</location>
        <location evidence="2">Chloroplast thylakoid membrane</location>
        <topology>Peripheral membrane protein</topology>
        <orientation>Lumenal side</orientation>
    </subcellularLocation>
    <text>Loosely bound to the inner thylakoid membrane surface in chloroplasts.</text>
</comment>
<comment type="similarity">
    <text evidence="3">Belongs to the plastocyanin family.</text>
</comment>
<dbReference type="PIR" id="JW0011">
    <property type="entry name" value="JW0011"/>
</dbReference>
<dbReference type="SMR" id="P20422"/>
<dbReference type="GO" id="GO:0009543">
    <property type="term" value="C:chloroplast thylakoid lumen"/>
    <property type="evidence" value="ECO:0007669"/>
    <property type="project" value="TreeGrafter"/>
</dbReference>
<dbReference type="GO" id="GO:0009535">
    <property type="term" value="C:chloroplast thylakoid membrane"/>
    <property type="evidence" value="ECO:0007669"/>
    <property type="project" value="UniProtKB-SubCell"/>
</dbReference>
<dbReference type="GO" id="GO:0005507">
    <property type="term" value="F:copper ion binding"/>
    <property type="evidence" value="ECO:0007669"/>
    <property type="project" value="InterPro"/>
</dbReference>
<dbReference type="GO" id="GO:0046028">
    <property type="term" value="F:electron transporter, transferring electrons from cytochrome b6/f complex of photosystem II activity"/>
    <property type="evidence" value="ECO:0007669"/>
    <property type="project" value="TreeGrafter"/>
</dbReference>
<dbReference type="CDD" id="cd04219">
    <property type="entry name" value="Plastocyanin"/>
    <property type="match status" value="1"/>
</dbReference>
<dbReference type="Gene3D" id="2.60.40.420">
    <property type="entry name" value="Cupredoxins - blue copper proteins"/>
    <property type="match status" value="1"/>
</dbReference>
<dbReference type="InterPro" id="IPR000923">
    <property type="entry name" value="BlueCu_1"/>
</dbReference>
<dbReference type="InterPro" id="IPR028871">
    <property type="entry name" value="BlueCu_1_BS"/>
</dbReference>
<dbReference type="InterPro" id="IPR001235">
    <property type="entry name" value="Copper_blue_Plastocyanin"/>
</dbReference>
<dbReference type="InterPro" id="IPR008972">
    <property type="entry name" value="Cupredoxin"/>
</dbReference>
<dbReference type="InterPro" id="IPR002387">
    <property type="entry name" value="Plastocyanin"/>
</dbReference>
<dbReference type="NCBIfam" id="TIGR02656">
    <property type="entry name" value="cyanin_plasto"/>
    <property type="match status" value="1"/>
</dbReference>
<dbReference type="PANTHER" id="PTHR34192">
    <property type="entry name" value="PLASTOCYANIN MAJOR ISOFORM, CHLOROPLASTIC-RELATED"/>
    <property type="match status" value="1"/>
</dbReference>
<dbReference type="PANTHER" id="PTHR34192:SF10">
    <property type="entry name" value="PLASTOCYANIN MAJOR ISOFORM, CHLOROPLASTIC-RELATED"/>
    <property type="match status" value="1"/>
</dbReference>
<dbReference type="Pfam" id="PF00127">
    <property type="entry name" value="Copper-bind"/>
    <property type="match status" value="1"/>
</dbReference>
<dbReference type="PRINTS" id="PR00156">
    <property type="entry name" value="COPPERBLUE"/>
</dbReference>
<dbReference type="PRINTS" id="PR00157">
    <property type="entry name" value="PLASTOCYANIN"/>
</dbReference>
<dbReference type="SUPFAM" id="SSF49503">
    <property type="entry name" value="Cupredoxins"/>
    <property type="match status" value="1"/>
</dbReference>
<dbReference type="PROSITE" id="PS00196">
    <property type="entry name" value="COPPER_BLUE"/>
    <property type="match status" value="1"/>
</dbReference>
<reference key="1">
    <citation type="journal article" date="1985" name="Seikagaku">
        <title>Complete amino acid sequence of plastocyanin from Daucus carota.</title>
        <authorList>
            <person name="Shoji A."/>
            <person name="Yoshizaki F."/>
            <person name="Karahashi A."/>
            <person name="Sugimura Y."/>
            <person name="Shimokoriyama M."/>
        </authorList>
    </citation>
    <scope>PROTEIN SEQUENCE</scope>
    <scope>SUBCELLULAR LOCATION</scope>
</reference>